<protein>
    <recommendedName>
        <fullName evidence="1">2-dehydro-3-deoxyphosphooctonate aldolase</fullName>
        <ecNumber evidence="1">2.5.1.55</ecNumber>
    </recommendedName>
    <alternativeName>
        <fullName evidence="1">3-deoxy-D-manno-octulosonic acid 8-phosphate synthase</fullName>
    </alternativeName>
    <alternativeName>
        <fullName evidence="1">KDO-8-phosphate synthase</fullName>
        <shortName evidence="1">KDO 8-P synthase</shortName>
        <shortName evidence="1">KDOPS</shortName>
    </alternativeName>
    <alternativeName>
        <fullName evidence="1">Phospho-2-dehydro-3-deoxyoctonate aldolase</fullName>
    </alternativeName>
</protein>
<keyword id="KW-0963">Cytoplasm</keyword>
<keyword id="KW-0448">Lipopolysaccharide biosynthesis</keyword>
<keyword id="KW-0808">Transferase</keyword>
<sequence>MSQLKPQEVVRLGDIQMANHLPFVLFGGMNVLESKDLAFEIAETYIDICKRLDIPYVFKASFDKANRSSLHSFRGPGLEKGIEWLGDIKKHFNVPIITDVHEPYQAAPVAEVADIIQLPAFLSRQTDLVEAMAKTQAIINIKKAQFLAPHEMRHILHKCLEVGNDKLILCERGSAFGYNNLVVDMLGFDIMKEMNVPVFFDVTHALQTPGGRSDSAGGRRAQITTLARAGMATGLAGLFLESHPDPDKAKCDGPSALRLSQLEPFLAQLKELDTLVKGFKKLDTH</sequence>
<dbReference type="EC" id="2.5.1.55" evidence="1"/>
<dbReference type="EMBL" id="CU468230">
    <property type="protein sequence ID" value="CAP01364.1"/>
    <property type="molecule type" value="Genomic_DNA"/>
</dbReference>
<dbReference type="SMR" id="B0VQI5"/>
<dbReference type="KEGG" id="abm:ABSDF2033"/>
<dbReference type="HOGENOM" id="CLU_036666_0_0_6"/>
<dbReference type="UniPathway" id="UPA00030"/>
<dbReference type="UniPathway" id="UPA00357">
    <property type="reaction ID" value="UER00474"/>
</dbReference>
<dbReference type="Proteomes" id="UP000001741">
    <property type="component" value="Chromosome"/>
</dbReference>
<dbReference type="GO" id="GO:0005737">
    <property type="term" value="C:cytoplasm"/>
    <property type="evidence" value="ECO:0007669"/>
    <property type="project" value="UniProtKB-SubCell"/>
</dbReference>
<dbReference type="GO" id="GO:0008676">
    <property type="term" value="F:3-deoxy-8-phosphooctulonate synthase activity"/>
    <property type="evidence" value="ECO:0007669"/>
    <property type="project" value="UniProtKB-UniRule"/>
</dbReference>
<dbReference type="GO" id="GO:0019294">
    <property type="term" value="P:keto-3-deoxy-D-manno-octulosonic acid biosynthetic process"/>
    <property type="evidence" value="ECO:0007669"/>
    <property type="project" value="UniProtKB-UniRule"/>
</dbReference>
<dbReference type="Gene3D" id="3.20.20.70">
    <property type="entry name" value="Aldolase class I"/>
    <property type="match status" value="1"/>
</dbReference>
<dbReference type="HAMAP" id="MF_00056">
    <property type="entry name" value="KDO8P_synth"/>
    <property type="match status" value="1"/>
</dbReference>
<dbReference type="InterPro" id="IPR013785">
    <property type="entry name" value="Aldolase_TIM"/>
</dbReference>
<dbReference type="InterPro" id="IPR006218">
    <property type="entry name" value="DAHP1/KDSA"/>
</dbReference>
<dbReference type="InterPro" id="IPR006269">
    <property type="entry name" value="KDO8P_synthase"/>
</dbReference>
<dbReference type="NCBIfam" id="TIGR01362">
    <property type="entry name" value="KDO8P_synth"/>
    <property type="match status" value="1"/>
</dbReference>
<dbReference type="NCBIfam" id="NF003543">
    <property type="entry name" value="PRK05198.1"/>
    <property type="match status" value="1"/>
</dbReference>
<dbReference type="PANTHER" id="PTHR21057">
    <property type="entry name" value="PHOSPHO-2-DEHYDRO-3-DEOXYHEPTONATE ALDOLASE"/>
    <property type="match status" value="1"/>
</dbReference>
<dbReference type="Pfam" id="PF00793">
    <property type="entry name" value="DAHP_synth_1"/>
    <property type="match status" value="1"/>
</dbReference>
<dbReference type="SUPFAM" id="SSF51569">
    <property type="entry name" value="Aldolase"/>
    <property type="match status" value="1"/>
</dbReference>
<feature type="chain" id="PRO_1000091792" description="2-dehydro-3-deoxyphosphooctonate aldolase">
    <location>
        <begin position="1"/>
        <end position="285"/>
    </location>
</feature>
<gene>
    <name evidence="1" type="primary">kdsA</name>
    <name type="ordered locus">ABSDF2033</name>
</gene>
<accession>B0VQI5</accession>
<comment type="catalytic activity">
    <reaction evidence="1">
        <text>D-arabinose 5-phosphate + phosphoenolpyruvate + H2O = 3-deoxy-alpha-D-manno-2-octulosonate-8-phosphate + phosphate</text>
        <dbReference type="Rhea" id="RHEA:14053"/>
        <dbReference type="ChEBI" id="CHEBI:15377"/>
        <dbReference type="ChEBI" id="CHEBI:43474"/>
        <dbReference type="ChEBI" id="CHEBI:57693"/>
        <dbReference type="ChEBI" id="CHEBI:58702"/>
        <dbReference type="ChEBI" id="CHEBI:85985"/>
        <dbReference type="EC" id="2.5.1.55"/>
    </reaction>
</comment>
<comment type="pathway">
    <text evidence="1">Carbohydrate biosynthesis; 3-deoxy-D-manno-octulosonate biosynthesis; 3-deoxy-D-manno-octulosonate from D-ribulose 5-phosphate: step 2/3.</text>
</comment>
<comment type="pathway">
    <text evidence="1">Bacterial outer membrane biogenesis; lipopolysaccharide biosynthesis.</text>
</comment>
<comment type="subcellular location">
    <subcellularLocation>
        <location evidence="1">Cytoplasm</location>
    </subcellularLocation>
</comment>
<comment type="similarity">
    <text evidence="1">Belongs to the KdsA family.</text>
</comment>
<evidence type="ECO:0000255" key="1">
    <source>
        <dbReference type="HAMAP-Rule" id="MF_00056"/>
    </source>
</evidence>
<reference key="1">
    <citation type="journal article" date="2008" name="PLoS ONE">
        <title>Comparative analysis of Acinetobacters: three genomes for three lifestyles.</title>
        <authorList>
            <person name="Vallenet D."/>
            <person name="Nordmann P."/>
            <person name="Barbe V."/>
            <person name="Poirel L."/>
            <person name="Mangenot S."/>
            <person name="Bataille E."/>
            <person name="Dossat C."/>
            <person name="Gas S."/>
            <person name="Kreimeyer A."/>
            <person name="Lenoble P."/>
            <person name="Oztas S."/>
            <person name="Poulain J."/>
            <person name="Segurens B."/>
            <person name="Robert C."/>
            <person name="Abergel C."/>
            <person name="Claverie J.-M."/>
            <person name="Raoult D."/>
            <person name="Medigue C."/>
            <person name="Weissenbach J."/>
            <person name="Cruveiller S."/>
        </authorList>
    </citation>
    <scope>NUCLEOTIDE SEQUENCE [LARGE SCALE GENOMIC DNA]</scope>
    <source>
        <strain>SDF</strain>
    </source>
</reference>
<proteinExistence type="inferred from homology"/>
<organism>
    <name type="scientific">Acinetobacter baumannii (strain SDF)</name>
    <dbReference type="NCBI Taxonomy" id="509170"/>
    <lineage>
        <taxon>Bacteria</taxon>
        <taxon>Pseudomonadati</taxon>
        <taxon>Pseudomonadota</taxon>
        <taxon>Gammaproteobacteria</taxon>
        <taxon>Moraxellales</taxon>
        <taxon>Moraxellaceae</taxon>
        <taxon>Acinetobacter</taxon>
        <taxon>Acinetobacter calcoaceticus/baumannii complex</taxon>
    </lineage>
</organism>
<name>KDSA_ACIBS</name>